<evidence type="ECO:0000255" key="1">
    <source>
        <dbReference type="HAMAP-Rule" id="MF_01589"/>
    </source>
</evidence>
<keyword id="KW-0949">S-adenosyl-L-methionine</keyword>
<keyword id="KW-0808">Transferase</keyword>
<comment type="function">
    <text evidence="1">Catalyzes the conversion of S-adenosyl-L-methionine (SAM) to carboxy-S-adenosyl-L-methionine (Cx-SAM).</text>
</comment>
<comment type="catalytic activity">
    <reaction evidence="1">
        <text>prephenate + S-adenosyl-L-methionine = carboxy-S-adenosyl-L-methionine + 3-phenylpyruvate + H2O</text>
        <dbReference type="Rhea" id="RHEA:51692"/>
        <dbReference type="ChEBI" id="CHEBI:15377"/>
        <dbReference type="ChEBI" id="CHEBI:18005"/>
        <dbReference type="ChEBI" id="CHEBI:29934"/>
        <dbReference type="ChEBI" id="CHEBI:59789"/>
        <dbReference type="ChEBI" id="CHEBI:134278"/>
    </reaction>
</comment>
<comment type="subunit">
    <text evidence="1">Homodimer.</text>
</comment>
<comment type="similarity">
    <text evidence="1">Belongs to the class I-like SAM-binding methyltransferase superfamily. Cx-SAM synthase family.</text>
</comment>
<proteinExistence type="inferred from homology"/>
<dbReference type="EC" id="2.1.3.-" evidence="1"/>
<dbReference type="EMBL" id="CP001048">
    <property type="protein sequence ID" value="ACC88900.1"/>
    <property type="molecule type" value="Genomic_DNA"/>
</dbReference>
<dbReference type="RefSeq" id="WP_011192339.1">
    <property type="nucleotide sequence ID" value="NZ_CP009780.1"/>
</dbReference>
<dbReference type="SMR" id="B2K217"/>
<dbReference type="KEGG" id="ypb:YPTS_1933"/>
<dbReference type="PATRIC" id="fig|502801.10.peg.1313"/>
<dbReference type="GO" id="GO:0016743">
    <property type="term" value="F:carboxyl- or carbamoyltransferase activity"/>
    <property type="evidence" value="ECO:0007669"/>
    <property type="project" value="UniProtKB-UniRule"/>
</dbReference>
<dbReference type="GO" id="GO:1904047">
    <property type="term" value="F:S-adenosyl-L-methionine binding"/>
    <property type="evidence" value="ECO:0007669"/>
    <property type="project" value="UniProtKB-UniRule"/>
</dbReference>
<dbReference type="GO" id="GO:0002098">
    <property type="term" value="P:tRNA wobble uridine modification"/>
    <property type="evidence" value="ECO:0007669"/>
    <property type="project" value="InterPro"/>
</dbReference>
<dbReference type="CDD" id="cd02440">
    <property type="entry name" value="AdoMet_MTases"/>
    <property type="match status" value="1"/>
</dbReference>
<dbReference type="Gene3D" id="3.40.50.150">
    <property type="entry name" value="Vaccinia Virus protein VP39"/>
    <property type="match status" value="1"/>
</dbReference>
<dbReference type="HAMAP" id="MF_01589">
    <property type="entry name" value="Cx_SAM_synthase"/>
    <property type="match status" value="1"/>
</dbReference>
<dbReference type="InterPro" id="IPR005271">
    <property type="entry name" value="CmoA"/>
</dbReference>
<dbReference type="InterPro" id="IPR041698">
    <property type="entry name" value="Methyltransf_25"/>
</dbReference>
<dbReference type="InterPro" id="IPR029063">
    <property type="entry name" value="SAM-dependent_MTases_sf"/>
</dbReference>
<dbReference type="PANTHER" id="PTHR43861:SF2">
    <property type="entry name" value="CARBOXY-S-ADENOSYL-L-METHIONINE SYNTHASE"/>
    <property type="match status" value="1"/>
</dbReference>
<dbReference type="PANTHER" id="PTHR43861">
    <property type="entry name" value="TRANS-ACONITATE 2-METHYLTRANSFERASE-RELATED"/>
    <property type="match status" value="1"/>
</dbReference>
<dbReference type="Pfam" id="PF13649">
    <property type="entry name" value="Methyltransf_25"/>
    <property type="match status" value="1"/>
</dbReference>
<dbReference type="PIRSF" id="PIRSF006325">
    <property type="entry name" value="MeTrfase_bac"/>
    <property type="match status" value="1"/>
</dbReference>
<dbReference type="SUPFAM" id="SSF53335">
    <property type="entry name" value="S-adenosyl-L-methionine-dependent methyltransferases"/>
    <property type="match status" value="1"/>
</dbReference>
<gene>
    <name evidence="1" type="primary">cmoA1</name>
    <name type="ordered locus">YPTS_1933</name>
</gene>
<sequence>MNIDKIFENPSNLRSFEFNNDVCKVFDDMVSRSVPGYHNIQDIISLTYDEFSQNRVFIDVGCSTGTTIAKILSENQVNYCYGIDISESMLAIAQEKCGEHESLVTFKNCNLLNGTDNVINSEKVPDFIILNLVLQFIRPPERKKFITNIKSLCSSSTLMLVFEKIIFNDAEINMKYIDSYLKWKGKNGYSESEVSNKRKALENKLIPYLHEENIELFKSSGFNSVEICFSFLNFRGYLCRC</sequence>
<organism>
    <name type="scientific">Yersinia pseudotuberculosis serotype IB (strain PB1/+)</name>
    <dbReference type="NCBI Taxonomy" id="502801"/>
    <lineage>
        <taxon>Bacteria</taxon>
        <taxon>Pseudomonadati</taxon>
        <taxon>Pseudomonadota</taxon>
        <taxon>Gammaproteobacteria</taxon>
        <taxon>Enterobacterales</taxon>
        <taxon>Yersiniaceae</taxon>
        <taxon>Yersinia</taxon>
    </lineage>
</organism>
<reference key="1">
    <citation type="submission" date="2008-04" db="EMBL/GenBank/DDBJ databases">
        <title>Complete sequence of Yersinia pseudotuberculosis PB1/+.</title>
        <authorList>
            <person name="Copeland A."/>
            <person name="Lucas S."/>
            <person name="Lapidus A."/>
            <person name="Glavina del Rio T."/>
            <person name="Dalin E."/>
            <person name="Tice H."/>
            <person name="Bruce D."/>
            <person name="Goodwin L."/>
            <person name="Pitluck S."/>
            <person name="Munk A.C."/>
            <person name="Brettin T."/>
            <person name="Detter J.C."/>
            <person name="Han C."/>
            <person name="Tapia R."/>
            <person name="Schmutz J."/>
            <person name="Larimer F."/>
            <person name="Land M."/>
            <person name="Hauser L."/>
            <person name="Challacombe J.F."/>
            <person name="Green L."/>
            <person name="Lindler L.E."/>
            <person name="Nikolich M.P."/>
            <person name="Richardson P."/>
        </authorList>
    </citation>
    <scope>NUCLEOTIDE SEQUENCE [LARGE SCALE GENOMIC DNA]</scope>
    <source>
        <strain>PB1/+</strain>
    </source>
</reference>
<name>CMOA1_YERPB</name>
<protein>
    <recommendedName>
        <fullName evidence="1">Carboxy-S-adenosyl-L-methionine synthase 1</fullName>
        <shortName evidence="1">Cx-SAM synthase 1</shortName>
        <ecNumber evidence="1">2.1.3.-</ecNumber>
    </recommendedName>
</protein>
<accession>B2K217</accession>
<feature type="chain" id="PRO_0000381963" description="Carboxy-S-adenosyl-L-methionine synthase 1">
    <location>
        <begin position="1"/>
        <end position="241"/>
    </location>
</feature>
<feature type="binding site" evidence="1">
    <location>
        <position position="37"/>
    </location>
    <ligand>
        <name>S-adenosyl-L-methionine</name>
        <dbReference type="ChEBI" id="CHEBI:59789"/>
    </ligand>
</feature>
<feature type="binding site" evidence="1">
    <location>
        <begin position="61"/>
        <end position="63"/>
    </location>
    <ligand>
        <name>S-adenosyl-L-methionine</name>
        <dbReference type="ChEBI" id="CHEBI:59789"/>
    </ligand>
</feature>
<feature type="binding site" evidence="1">
    <location>
        <position position="131"/>
    </location>
    <ligand>
        <name>S-adenosyl-L-methionine</name>
        <dbReference type="ChEBI" id="CHEBI:59789"/>
    </ligand>
</feature>
<feature type="binding site" evidence="1">
    <location>
        <position position="198"/>
    </location>
    <ligand>
        <name>S-adenosyl-L-methionine</name>
        <dbReference type="ChEBI" id="CHEBI:59789"/>
    </ligand>
</feature>